<name>RSMJ_ACIAD</name>
<proteinExistence type="inferred from homology"/>
<feature type="chain" id="PRO_0000212056" description="Ribosomal RNA small subunit methyltransferase J">
    <location>
        <begin position="1"/>
        <end position="270"/>
    </location>
</feature>
<feature type="binding site" evidence="1">
    <location>
        <begin position="126"/>
        <end position="127"/>
    </location>
    <ligand>
        <name>S-adenosyl-L-methionine</name>
        <dbReference type="ChEBI" id="CHEBI:59789"/>
    </ligand>
</feature>
<feature type="binding site" evidence="1">
    <location>
        <position position="182"/>
    </location>
    <ligand>
        <name>S-adenosyl-L-methionine</name>
        <dbReference type="ChEBI" id="CHEBI:59789"/>
    </ligand>
</feature>
<comment type="function">
    <text evidence="1">Specifically methylates the guanosine in position 1516 of 16S rRNA.</text>
</comment>
<comment type="catalytic activity">
    <reaction evidence="1">
        <text>guanosine(1516) in 16S rRNA + S-adenosyl-L-methionine = N(2)-methylguanosine(1516) in 16S rRNA + S-adenosyl-L-homocysteine + H(+)</text>
        <dbReference type="Rhea" id="RHEA:43220"/>
        <dbReference type="Rhea" id="RHEA-COMP:10412"/>
        <dbReference type="Rhea" id="RHEA-COMP:10413"/>
        <dbReference type="ChEBI" id="CHEBI:15378"/>
        <dbReference type="ChEBI" id="CHEBI:57856"/>
        <dbReference type="ChEBI" id="CHEBI:59789"/>
        <dbReference type="ChEBI" id="CHEBI:74269"/>
        <dbReference type="ChEBI" id="CHEBI:74481"/>
        <dbReference type="EC" id="2.1.1.242"/>
    </reaction>
</comment>
<comment type="subcellular location">
    <subcellularLocation>
        <location evidence="1">Cytoplasm</location>
    </subcellularLocation>
</comment>
<comment type="similarity">
    <text evidence="1">Belongs to the methyltransferase superfamily. RsmJ family.</text>
</comment>
<accession>Q6FEB3</accession>
<evidence type="ECO:0000255" key="1">
    <source>
        <dbReference type="HAMAP-Rule" id="MF_01523"/>
    </source>
</evidence>
<organism>
    <name type="scientific">Acinetobacter baylyi (strain ATCC 33305 / BD413 / ADP1)</name>
    <dbReference type="NCBI Taxonomy" id="62977"/>
    <lineage>
        <taxon>Bacteria</taxon>
        <taxon>Pseudomonadati</taxon>
        <taxon>Pseudomonadota</taxon>
        <taxon>Gammaproteobacteria</taxon>
        <taxon>Moraxellales</taxon>
        <taxon>Moraxellaceae</taxon>
        <taxon>Acinetobacter</taxon>
    </lineage>
</organism>
<dbReference type="EC" id="2.1.1.242" evidence="1"/>
<dbReference type="EMBL" id="CR543861">
    <property type="protein sequence ID" value="CAG67595.1"/>
    <property type="molecule type" value="Genomic_DNA"/>
</dbReference>
<dbReference type="RefSeq" id="WP_004922654.1">
    <property type="nucleotide sequence ID" value="NC_005966.1"/>
</dbReference>
<dbReference type="SMR" id="Q6FEB3"/>
<dbReference type="STRING" id="202950.GCA_001485005_02445"/>
<dbReference type="GeneID" id="45233155"/>
<dbReference type="KEGG" id="aci:ACIAD0679"/>
<dbReference type="eggNOG" id="COG0742">
    <property type="taxonomic scope" value="Bacteria"/>
</dbReference>
<dbReference type="HOGENOM" id="CLU_076324_1_0_6"/>
<dbReference type="OrthoDB" id="3191794at2"/>
<dbReference type="BioCyc" id="ASP62977:ACIAD_RS03135-MONOMER"/>
<dbReference type="Proteomes" id="UP000000430">
    <property type="component" value="Chromosome"/>
</dbReference>
<dbReference type="GO" id="GO:0005737">
    <property type="term" value="C:cytoplasm"/>
    <property type="evidence" value="ECO:0007669"/>
    <property type="project" value="UniProtKB-SubCell"/>
</dbReference>
<dbReference type="GO" id="GO:0008990">
    <property type="term" value="F:rRNA (guanine-N2-)-methyltransferase activity"/>
    <property type="evidence" value="ECO:0007669"/>
    <property type="project" value="UniProtKB-UniRule"/>
</dbReference>
<dbReference type="CDD" id="cd02440">
    <property type="entry name" value="AdoMet_MTases"/>
    <property type="match status" value="1"/>
</dbReference>
<dbReference type="Gene3D" id="3.40.50.150">
    <property type="entry name" value="Vaccinia Virus protein VP39"/>
    <property type="match status" value="1"/>
</dbReference>
<dbReference type="HAMAP" id="MF_01523">
    <property type="entry name" value="16SrRNA_methyltr_J"/>
    <property type="match status" value="1"/>
</dbReference>
<dbReference type="InterPro" id="IPR007536">
    <property type="entry name" value="16SrRNA_methylTrfase_J"/>
</dbReference>
<dbReference type="InterPro" id="IPR029063">
    <property type="entry name" value="SAM-dependent_MTases_sf"/>
</dbReference>
<dbReference type="PANTHER" id="PTHR36112">
    <property type="entry name" value="RIBOSOMAL RNA SMALL SUBUNIT METHYLTRANSFERASE J"/>
    <property type="match status" value="1"/>
</dbReference>
<dbReference type="PANTHER" id="PTHR36112:SF1">
    <property type="entry name" value="RIBOSOMAL RNA SMALL SUBUNIT METHYLTRANSFERASE J"/>
    <property type="match status" value="1"/>
</dbReference>
<dbReference type="Pfam" id="PF04445">
    <property type="entry name" value="SAM_MT"/>
    <property type="match status" value="1"/>
</dbReference>
<dbReference type="SUPFAM" id="SSF53335">
    <property type="entry name" value="S-adenosyl-L-methionine-dependent methyltransferases"/>
    <property type="match status" value="1"/>
</dbReference>
<keyword id="KW-0963">Cytoplasm</keyword>
<keyword id="KW-0489">Methyltransferase</keyword>
<keyword id="KW-0698">rRNA processing</keyword>
<keyword id="KW-0949">S-adenosyl-L-methionine</keyword>
<keyword id="KW-0808">Transferase</keyword>
<sequence>MVKPMHLFAVVDALEQAQQFQQVLASRDVSTELVQIEQLNARFLRHHPELALCVDLDGLWLSANGMKMQPDWQAEIPRLKRASLKSEMIARACQINEQPSLIDATAGLGHDSLLMAYLGAHVTLVERHPVLFTLLEDAKSKAENDPFLSKYMQRIHLIFQDAHYYLQQCNQDDRKVDVIYLDPMFPQRDQHHQVIKKQAQVKKQMQLLHLLLPEDGEMDLGDQLLPLAQQIASRVVVKRPKHAVFLNEQQPDHQWQGDACRFDAYFQISM</sequence>
<reference key="1">
    <citation type="journal article" date="2004" name="Nucleic Acids Res.">
        <title>Unique features revealed by the genome sequence of Acinetobacter sp. ADP1, a versatile and naturally transformation competent bacterium.</title>
        <authorList>
            <person name="Barbe V."/>
            <person name="Vallenet D."/>
            <person name="Fonknechten N."/>
            <person name="Kreimeyer A."/>
            <person name="Oztas S."/>
            <person name="Labarre L."/>
            <person name="Cruveiller S."/>
            <person name="Robert C."/>
            <person name="Duprat S."/>
            <person name="Wincker P."/>
            <person name="Ornston L.N."/>
            <person name="Weissenbach J."/>
            <person name="Marliere P."/>
            <person name="Cohen G.N."/>
            <person name="Medigue C."/>
        </authorList>
    </citation>
    <scope>NUCLEOTIDE SEQUENCE [LARGE SCALE GENOMIC DNA]</scope>
    <source>
        <strain>ATCC 33305 / BD413 / ADP1</strain>
    </source>
</reference>
<gene>
    <name evidence="1" type="primary">rsmJ</name>
    <name type="ordered locus">ACIAD0679</name>
</gene>
<protein>
    <recommendedName>
        <fullName evidence="1">Ribosomal RNA small subunit methyltransferase J</fullName>
        <ecNumber evidence="1">2.1.1.242</ecNumber>
    </recommendedName>
    <alternativeName>
        <fullName evidence="1">16S rRNA m2G1516 methyltransferase</fullName>
    </alternativeName>
    <alternativeName>
        <fullName evidence="1">rRNA (guanine-N(2)-)-methyltransferase</fullName>
    </alternativeName>
</protein>